<proteinExistence type="inferred from homology"/>
<evidence type="ECO:0000250" key="1"/>
<evidence type="ECO:0000255" key="2">
    <source>
        <dbReference type="HAMAP-Rule" id="MF_00138"/>
    </source>
</evidence>
<dbReference type="EC" id="6.3.4.13" evidence="2"/>
<dbReference type="EMBL" id="AE000516">
    <property type="protein sequence ID" value="AAK45038.1"/>
    <property type="molecule type" value="Genomic_DNA"/>
</dbReference>
<dbReference type="PIR" id="G70707">
    <property type="entry name" value="G70707"/>
</dbReference>
<dbReference type="RefSeq" id="WP_003898580.1">
    <property type="nucleotide sequence ID" value="NZ_KK341227.1"/>
</dbReference>
<dbReference type="SMR" id="P9WHM8"/>
<dbReference type="KEGG" id="mtc:MT0796"/>
<dbReference type="PATRIC" id="fig|83331.31.peg.855"/>
<dbReference type="HOGENOM" id="CLU_027420_3_1_11"/>
<dbReference type="UniPathway" id="UPA00074">
    <property type="reaction ID" value="UER00125"/>
</dbReference>
<dbReference type="Proteomes" id="UP000001020">
    <property type="component" value="Chromosome"/>
</dbReference>
<dbReference type="GO" id="GO:0005524">
    <property type="term" value="F:ATP binding"/>
    <property type="evidence" value="ECO:0007669"/>
    <property type="project" value="UniProtKB-KW"/>
</dbReference>
<dbReference type="GO" id="GO:0046872">
    <property type="term" value="F:metal ion binding"/>
    <property type="evidence" value="ECO:0007669"/>
    <property type="project" value="UniProtKB-KW"/>
</dbReference>
<dbReference type="GO" id="GO:0004637">
    <property type="term" value="F:phosphoribosylamine-glycine ligase activity"/>
    <property type="evidence" value="ECO:0007669"/>
    <property type="project" value="UniProtKB-UniRule"/>
</dbReference>
<dbReference type="GO" id="GO:0006189">
    <property type="term" value="P:'de novo' IMP biosynthetic process"/>
    <property type="evidence" value="ECO:0007669"/>
    <property type="project" value="UniProtKB-UniRule"/>
</dbReference>
<dbReference type="GO" id="GO:0009113">
    <property type="term" value="P:purine nucleobase biosynthetic process"/>
    <property type="evidence" value="ECO:0007669"/>
    <property type="project" value="InterPro"/>
</dbReference>
<dbReference type="Gene3D" id="3.40.50.20">
    <property type="match status" value="1"/>
</dbReference>
<dbReference type="Gene3D" id="3.30.1490.20">
    <property type="entry name" value="ATP-grasp fold, A domain"/>
    <property type="match status" value="1"/>
</dbReference>
<dbReference type="Gene3D" id="3.30.470.20">
    <property type="entry name" value="ATP-grasp fold, B domain"/>
    <property type="match status" value="1"/>
</dbReference>
<dbReference type="Gene3D" id="3.90.600.10">
    <property type="entry name" value="Phosphoribosylglycinamide synthetase, C-terminal domain"/>
    <property type="match status" value="1"/>
</dbReference>
<dbReference type="HAMAP" id="MF_00138">
    <property type="entry name" value="GARS"/>
    <property type="match status" value="1"/>
</dbReference>
<dbReference type="InterPro" id="IPR011761">
    <property type="entry name" value="ATP-grasp"/>
</dbReference>
<dbReference type="InterPro" id="IPR013815">
    <property type="entry name" value="ATP_grasp_subdomain_1"/>
</dbReference>
<dbReference type="InterPro" id="IPR016185">
    <property type="entry name" value="PreATP-grasp_dom_sf"/>
</dbReference>
<dbReference type="InterPro" id="IPR020561">
    <property type="entry name" value="PRibGlycinamid_synth_ATP-grasp"/>
</dbReference>
<dbReference type="InterPro" id="IPR000115">
    <property type="entry name" value="PRibGlycinamide_synth"/>
</dbReference>
<dbReference type="InterPro" id="IPR020560">
    <property type="entry name" value="PRibGlycinamide_synth_C-dom"/>
</dbReference>
<dbReference type="InterPro" id="IPR037123">
    <property type="entry name" value="PRibGlycinamide_synth_C_sf"/>
</dbReference>
<dbReference type="InterPro" id="IPR020559">
    <property type="entry name" value="PRibGlycinamide_synth_CS"/>
</dbReference>
<dbReference type="InterPro" id="IPR020562">
    <property type="entry name" value="PRibGlycinamide_synth_N"/>
</dbReference>
<dbReference type="InterPro" id="IPR011054">
    <property type="entry name" value="Rudment_hybrid_motif"/>
</dbReference>
<dbReference type="NCBIfam" id="TIGR00877">
    <property type="entry name" value="purD"/>
    <property type="match status" value="1"/>
</dbReference>
<dbReference type="PANTHER" id="PTHR43472">
    <property type="entry name" value="PHOSPHORIBOSYLAMINE--GLYCINE LIGASE"/>
    <property type="match status" value="1"/>
</dbReference>
<dbReference type="PANTHER" id="PTHR43472:SF1">
    <property type="entry name" value="PHOSPHORIBOSYLAMINE--GLYCINE LIGASE, CHLOROPLASTIC"/>
    <property type="match status" value="1"/>
</dbReference>
<dbReference type="Pfam" id="PF01071">
    <property type="entry name" value="GARS_A"/>
    <property type="match status" value="1"/>
</dbReference>
<dbReference type="Pfam" id="PF02843">
    <property type="entry name" value="GARS_C"/>
    <property type="match status" value="1"/>
</dbReference>
<dbReference type="Pfam" id="PF02844">
    <property type="entry name" value="GARS_N"/>
    <property type="match status" value="1"/>
</dbReference>
<dbReference type="SMART" id="SM01209">
    <property type="entry name" value="GARS_A"/>
    <property type="match status" value="1"/>
</dbReference>
<dbReference type="SMART" id="SM01210">
    <property type="entry name" value="GARS_C"/>
    <property type="match status" value="1"/>
</dbReference>
<dbReference type="SUPFAM" id="SSF56059">
    <property type="entry name" value="Glutathione synthetase ATP-binding domain-like"/>
    <property type="match status" value="1"/>
</dbReference>
<dbReference type="SUPFAM" id="SSF52440">
    <property type="entry name" value="PreATP-grasp domain"/>
    <property type="match status" value="1"/>
</dbReference>
<dbReference type="SUPFAM" id="SSF51246">
    <property type="entry name" value="Rudiment single hybrid motif"/>
    <property type="match status" value="1"/>
</dbReference>
<dbReference type="PROSITE" id="PS50975">
    <property type="entry name" value="ATP_GRASP"/>
    <property type="match status" value="1"/>
</dbReference>
<dbReference type="PROSITE" id="PS00184">
    <property type="entry name" value="GARS"/>
    <property type="match status" value="1"/>
</dbReference>
<reference key="1">
    <citation type="journal article" date="2002" name="J. Bacteriol.">
        <title>Whole-genome comparison of Mycobacterium tuberculosis clinical and laboratory strains.</title>
        <authorList>
            <person name="Fleischmann R.D."/>
            <person name="Alland D."/>
            <person name="Eisen J.A."/>
            <person name="Carpenter L."/>
            <person name="White O."/>
            <person name="Peterson J.D."/>
            <person name="DeBoy R.T."/>
            <person name="Dodson R.J."/>
            <person name="Gwinn M.L."/>
            <person name="Haft D.H."/>
            <person name="Hickey E.K."/>
            <person name="Kolonay J.F."/>
            <person name="Nelson W.C."/>
            <person name="Umayam L.A."/>
            <person name="Ermolaeva M.D."/>
            <person name="Salzberg S.L."/>
            <person name="Delcher A."/>
            <person name="Utterback T.R."/>
            <person name="Weidman J.F."/>
            <person name="Khouri H.M."/>
            <person name="Gill J."/>
            <person name="Mikula A."/>
            <person name="Bishai W."/>
            <person name="Jacobs W.R. Jr."/>
            <person name="Venter J.C."/>
            <person name="Fraser C.M."/>
        </authorList>
    </citation>
    <scope>NUCLEOTIDE SEQUENCE [LARGE SCALE GENOMIC DNA]</scope>
    <source>
        <strain>CDC 1551 / Oshkosh</strain>
    </source>
</reference>
<accession>P9WHM8</accession>
<accession>L0T6F1</accession>
<accession>P65893</accession>
<accession>P71827</accession>
<feature type="chain" id="PRO_0000428157" description="Phosphoribosylamine--glycine ligase">
    <location>
        <begin position="1"/>
        <end position="422"/>
    </location>
</feature>
<feature type="domain" description="ATP-grasp" evidence="2">
    <location>
        <begin position="107"/>
        <end position="312"/>
    </location>
</feature>
<feature type="binding site" evidence="2">
    <location>
        <begin position="137"/>
        <end position="193"/>
    </location>
    <ligand>
        <name>ATP</name>
        <dbReference type="ChEBI" id="CHEBI:30616"/>
    </ligand>
</feature>
<feature type="binding site" evidence="2">
    <location>
        <position position="282"/>
    </location>
    <ligand>
        <name>Mg(2+)</name>
        <dbReference type="ChEBI" id="CHEBI:18420"/>
    </ligand>
</feature>
<feature type="binding site" evidence="2">
    <location>
        <position position="284"/>
    </location>
    <ligand>
        <name>Mg(2+)</name>
        <dbReference type="ChEBI" id="CHEBI:18420"/>
    </ligand>
</feature>
<organism>
    <name type="scientific">Mycobacterium tuberculosis (strain CDC 1551 / Oshkosh)</name>
    <dbReference type="NCBI Taxonomy" id="83331"/>
    <lineage>
        <taxon>Bacteria</taxon>
        <taxon>Bacillati</taxon>
        <taxon>Actinomycetota</taxon>
        <taxon>Actinomycetes</taxon>
        <taxon>Mycobacteriales</taxon>
        <taxon>Mycobacteriaceae</taxon>
        <taxon>Mycobacterium</taxon>
        <taxon>Mycobacterium tuberculosis complex</taxon>
    </lineage>
</organism>
<keyword id="KW-0067">ATP-binding</keyword>
<keyword id="KW-0436">Ligase</keyword>
<keyword id="KW-0460">Magnesium</keyword>
<keyword id="KW-0464">Manganese</keyword>
<keyword id="KW-0479">Metal-binding</keyword>
<keyword id="KW-0547">Nucleotide-binding</keyword>
<keyword id="KW-0658">Purine biosynthesis</keyword>
<keyword id="KW-1185">Reference proteome</keyword>
<name>PUR2_MYCTO</name>
<comment type="catalytic activity">
    <reaction evidence="2">
        <text>5-phospho-beta-D-ribosylamine + glycine + ATP = N(1)-(5-phospho-beta-D-ribosyl)glycinamide + ADP + phosphate + H(+)</text>
        <dbReference type="Rhea" id="RHEA:17453"/>
        <dbReference type="ChEBI" id="CHEBI:15378"/>
        <dbReference type="ChEBI" id="CHEBI:30616"/>
        <dbReference type="ChEBI" id="CHEBI:43474"/>
        <dbReference type="ChEBI" id="CHEBI:57305"/>
        <dbReference type="ChEBI" id="CHEBI:58681"/>
        <dbReference type="ChEBI" id="CHEBI:143788"/>
        <dbReference type="ChEBI" id="CHEBI:456216"/>
        <dbReference type="EC" id="6.3.4.13"/>
    </reaction>
</comment>
<comment type="cofactor">
    <cofactor evidence="1">
        <name>Mg(2+)</name>
        <dbReference type="ChEBI" id="CHEBI:18420"/>
    </cofactor>
    <cofactor evidence="1">
        <name>Mn(2+)</name>
        <dbReference type="ChEBI" id="CHEBI:29035"/>
    </cofactor>
    <text evidence="1">Binds 1 Mg(2+) or Mn(2+) ion per subunit.</text>
</comment>
<comment type="pathway">
    <text evidence="2">Purine metabolism; IMP biosynthesis via de novo pathway; N(1)-(5-phospho-D-ribosyl)glycinamide from 5-phospho-alpha-D-ribose 1-diphosphate: step 2/2.</text>
</comment>
<comment type="similarity">
    <text evidence="2">Belongs to the GARS family.</text>
</comment>
<sequence>MRVLVIGSGAREHALLLALGKDPQVSGLIVAPGNAGTARIAEQHDVDITSAEAVVALAREVGADMVVIGPEVPLVLGVADAVRAAGIVCFGPGKDAARIEGSKAFAKDVMAAAGVRTANSEIVDSPAHLDAALDRFGPPAGDPAWVVKDDRLAAGKGVVVTADRDVARAHGAALLEAGHPVLLESYLDGPEVSLFCVVDRTVVVPLLPAQDFKRVGEDDTGLNTGGMGAYAPLPWLPDNIYREVVSRIVEPVAAELVRRGSSFCGLLYVGLAITARGPAVVEFNCRFGDPETQAVLALLESPLGQLLHAAATGKLADFGELRWRDGVAVTVVLAAENYPGRPRVGDVVVGSEAEGVLHAGTTRRDDGAIVSSGGRVLSVVGTGADLSAARAHAYEILSSIRLPGGHFRSDIGLRAAEGKISV</sequence>
<gene>
    <name evidence="2" type="primary">purD</name>
    <name type="ordered locus">MT0796</name>
</gene>
<protein>
    <recommendedName>
        <fullName evidence="2">Phosphoribosylamine--glycine ligase</fullName>
        <ecNumber evidence="2">6.3.4.13</ecNumber>
    </recommendedName>
    <alternativeName>
        <fullName evidence="2">GARS</fullName>
    </alternativeName>
    <alternativeName>
        <fullName evidence="2">Glycinamide ribonucleotide synthetase</fullName>
    </alternativeName>
    <alternativeName>
        <fullName evidence="2">Phosphoribosylglycinamide synthetase</fullName>
    </alternativeName>
</protein>